<gene>
    <name evidence="1" type="primary">murE</name>
    <name type="ordered locus">CT0039</name>
</gene>
<comment type="function">
    <text evidence="1">Catalyzes the addition of meso-diaminopimelic acid to the nucleotide precursor UDP-N-acetylmuramoyl-L-alanyl-D-glutamate (UMAG) in the biosynthesis of bacterial cell-wall peptidoglycan.</text>
</comment>
<comment type="catalytic activity">
    <reaction evidence="1">
        <text>UDP-N-acetyl-alpha-D-muramoyl-L-alanyl-D-glutamate + meso-2,6-diaminopimelate + ATP = UDP-N-acetyl-alpha-D-muramoyl-L-alanyl-gamma-D-glutamyl-meso-2,6-diaminopimelate + ADP + phosphate + H(+)</text>
        <dbReference type="Rhea" id="RHEA:23676"/>
        <dbReference type="ChEBI" id="CHEBI:15378"/>
        <dbReference type="ChEBI" id="CHEBI:30616"/>
        <dbReference type="ChEBI" id="CHEBI:43474"/>
        <dbReference type="ChEBI" id="CHEBI:57791"/>
        <dbReference type="ChEBI" id="CHEBI:83900"/>
        <dbReference type="ChEBI" id="CHEBI:83905"/>
        <dbReference type="ChEBI" id="CHEBI:456216"/>
        <dbReference type="EC" id="6.3.2.13"/>
    </reaction>
</comment>
<comment type="cofactor">
    <cofactor evidence="1">
        <name>Mg(2+)</name>
        <dbReference type="ChEBI" id="CHEBI:18420"/>
    </cofactor>
</comment>
<comment type="pathway">
    <text evidence="1">Cell wall biogenesis; peptidoglycan biosynthesis.</text>
</comment>
<comment type="subcellular location">
    <subcellularLocation>
        <location evidence="1">Cytoplasm</location>
    </subcellularLocation>
</comment>
<comment type="PTM">
    <text evidence="1">Carboxylation is probably crucial for Mg(2+) binding and, consequently, for the gamma-phosphate positioning of ATP.</text>
</comment>
<comment type="similarity">
    <text evidence="1">Belongs to the MurCDEF family. MurE subfamily.</text>
</comment>
<accession>Q8KGC9</accession>
<feature type="chain" id="PRO_0000101882" description="UDP-N-acetylmuramoyl-L-alanyl-D-glutamate--2,6-diaminopimelate ligase">
    <location>
        <begin position="1"/>
        <end position="508"/>
    </location>
</feature>
<feature type="short sequence motif" description="Meso-diaminopimelate recognition motif">
    <location>
        <begin position="428"/>
        <end position="431"/>
    </location>
</feature>
<feature type="binding site" evidence="1">
    <location>
        <position position="43"/>
    </location>
    <ligand>
        <name>UDP-N-acetyl-alpha-D-muramoyl-L-alanyl-D-glutamate</name>
        <dbReference type="ChEBI" id="CHEBI:83900"/>
    </ligand>
</feature>
<feature type="binding site" evidence="1">
    <location>
        <begin position="124"/>
        <end position="130"/>
    </location>
    <ligand>
        <name>ATP</name>
        <dbReference type="ChEBI" id="CHEBI:30616"/>
    </ligand>
</feature>
<feature type="binding site" evidence="1">
    <location>
        <begin position="166"/>
        <end position="167"/>
    </location>
    <ligand>
        <name>UDP-N-acetyl-alpha-D-muramoyl-L-alanyl-D-glutamate</name>
        <dbReference type="ChEBI" id="CHEBI:83900"/>
    </ligand>
</feature>
<feature type="binding site" evidence="1">
    <location>
        <position position="193"/>
    </location>
    <ligand>
        <name>UDP-N-acetyl-alpha-D-muramoyl-L-alanyl-D-glutamate</name>
        <dbReference type="ChEBI" id="CHEBI:83900"/>
    </ligand>
</feature>
<feature type="binding site" evidence="1">
    <location>
        <position position="201"/>
    </location>
    <ligand>
        <name>UDP-N-acetyl-alpha-D-muramoyl-L-alanyl-D-glutamate</name>
        <dbReference type="ChEBI" id="CHEBI:83900"/>
    </ligand>
</feature>
<feature type="binding site" evidence="1">
    <location>
        <position position="404"/>
    </location>
    <ligand>
        <name>meso-2,6-diaminopimelate</name>
        <dbReference type="ChEBI" id="CHEBI:57791"/>
    </ligand>
</feature>
<feature type="binding site" evidence="1">
    <location>
        <begin position="428"/>
        <end position="431"/>
    </location>
    <ligand>
        <name>meso-2,6-diaminopimelate</name>
        <dbReference type="ChEBI" id="CHEBI:57791"/>
    </ligand>
</feature>
<feature type="binding site" evidence="1">
    <location>
        <position position="478"/>
    </location>
    <ligand>
        <name>meso-2,6-diaminopimelate</name>
        <dbReference type="ChEBI" id="CHEBI:57791"/>
    </ligand>
</feature>
<feature type="binding site" evidence="1">
    <location>
        <position position="482"/>
    </location>
    <ligand>
        <name>meso-2,6-diaminopimelate</name>
        <dbReference type="ChEBI" id="CHEBI:57791"/>
    </ligand>
</feature>
<feature type="modified residue" description="N6-carboxylysine" evidence="1">
    <location>
        <position position="233"/>
    </location>
</feature>
<keyword id="KW-0067">ATP-binding</keyword>
<keyword id="KW-0131">Cell cycle</keyword>
<keyword id="KW-0132">Cell division</keyword>
<keyword id="KW-0133">Cell shape</keyword>
<keyword id="KW-0961">Cell wall biogenesis/degradation</keyword>
<keyword id="KW-0963">Cytoplasm</keyword>
<keyword id="KW-0436">Ligase</keyword>
<keyword id="KW-0460">Magnesium</keyword>
<keyword id="KW-0547">Nucleotide-binding</keyword>
<keyword id="KW-0573">Peptidoglycan synthesis</keyword>
<keyword id="KW-1185">Reference proteome</keyword>
<protein>
    <recommendedName>
        <fullName evidence="1">UDP-N-acetylmuramoyl-L-alanyl-D-glutamate--2,6-diaminopimelate ligase</fullName>
        <ecNumber evidence="1">6.3.2.13</ecNumber>
    </recommendedName>
    <alternativeName>
        <fullName evidence="1">Meso-A2pm-adding enzyme</fullName>
    </alternativeName>
    <alternativeName>
        <fullName evidence="1">Meso-diaminopimelate-adding enzyme</fullName>
    </alternativeName>
    <alternativeName>
        <fullName evidence="1">UDP-MurNAc-L-Ala-D-Glu:meso-diaminopimelate ligase</fullName>
    </alternativeName>
    <alternativeName>
        <fullName evidence="1">UDP-MurNAc-tripeptide synthetase</fullName>
    </alternativeName>
    <alternativeName>
        <fullName evidence="1">UDP-N-acetylmuramyl-tripeptide synthetase</fullName>
    </alternativeName>
</protein>
<evidence type="ECO:0000255" key="1">
    <source>
        <dbReference type="HAMAP-Rule" id="MF_00208"/>
    </source>
</evidence>
<dbReference type="EC" id="6.3.2.13" evidence="1"/>
<dbReference type="EMBL" id="AE006470">
    <property type="protein sequence ID" value="AAM71287.1"/>
    <property type="molecule type" value="Genomic_DNA"/>
</dbReference>
<dbReference type="RefSeq" id="NP_660945.1">
    <property type="nucleotide sequence ID" value="NC_002932.3"/>
</dbReference>
<dbReference type="RefSeq" id="WP_010931733.1">
    <property type="nucleotide sequence ID" value="NC_002932.3"/>
</dbReference>
<dbReference type="SMR" id="Q8KGC9"/>
<dbReference type="STRING" id="194439.CT0039"/>
<dbReference type="EnsemblBacteria" id="AAM71287">
    <property type="protein sequence ID" value="AAM71287"/>
    <property type="gene ID" value="CT0039"/>
</dbReference>
<dbReference type="KEGG" id="cte:CT0039"/>
<dbReference type="PATRIC" id="fig|194439.7.peg.38"/>
<dbReference type="eggNOG" id="COG0769">
    <property type="taxonomic scope" value="Bacteria"/>
</dbReference>
<dbReference type="HOGENOM" id="CLU_022291_4_1_10"/>
<dbReference type="OrthoDB" id="9800958at2"/>
<dbReference type="UniPathway" id="UPA00219"/>
<dbReference type="Proteomes" id="UP000001007">
    <property type="component" value="Chromosome"/>
</dbReference>
<dbReference type="GO" id="GO:0005737">
    <property type="term" value="C:cytoplasm"/>
    <property type="evidence" value="ECO:0007669"/>
    <property type="project" value="UniProtKB-SubCell"/>
</dbReference>
<dbReference type="GO" id="GO:0005524">
    <property type="term" value="F:ATP binding"/>
    <property type="evidence" value="ECO:0007669"/>
    <property type="project" value="UniProtKB-UniRule"/>
</dbReference>
<dbReference type="GO" id="GO:0000287">
    <property type="term" value="F:magnesium ion binding"/>
    <property type="evidence" value="ECO:0007669"/>
    <property type="project" value="UniProtKB-UniRule"/>
</dbReference>
<dbReference type="GO" id="GO:0004326">
    <property type="term" value="F:tetrahydrofolylpolyglutamate synthase activity"/>
    <property type="evidence" value="ECO:0007669"/>
    <property type="project" value="InterPro"/>
</dbReference>
<dbReference type="GO" id="GO:0008765">
    <property type="term" value="F:UDP-N-acetylmuramoylalanyl-D-glutamate-2,6-diaminopimelate ligase activity"/>
    <property type="evidence" value="ECO:0007669"/>
    <property type="project" value="UniProtKB-UniRule"/>
</dbReference>
<dbReference type="GO" id="GO:0051301">
    <property type="term" value="P:cell division"/>
    <property type="evidence" value="ECO:0007669"/>
    <property type="project" value="UniProtKB-KW"/>
</dbReference>
<dbReference type="GO" id="GO:0071555">
    <property type="term" value="P:cell wall organization"/>
    <property type="evidence" value="ECO:0007669"/>
    <property type="project" value="UniProtKB-KW"/>
</dbReference>
<dbReference type="GO" id="GO:0009252">
    <property type="term" value="P:peptidoglycan biosynthetic process"/>
    <property type="evidence" value="ECO:0007669"/>
    <property type="project" value="UniProtKB-UniRule"/>
</dbReference>
<dbReference type="GO" id="GO:0008360">
    <property type="term" value="P:regulation of cell shape"/>
    <property type="evidence" value="ECO:0007669"/>
    <property type="project" value="UniProtKB-KW"/>
</dbReference>
<dbReference type="Gene3D" id="3.90.190.20">
    <property type="entry name" value="Mur ligase, C-terminal domain"/>
    <property type="match status" value="1"/>
</dbReference>
<dbReference type="Gene3D" id="3.40.1190.10">
    <property type="entry name" value="Mur-like, catalytic domain"/>
    <property type="match status" value="1"/>
</dbReference>
<dbReference type="Gene3D" id="3.40.1390.10">
    <property type="entry name" value="MurE/MurF, N-terminal domain"/>
    <property type="match status" value="1"/>
</dbReference>
<dbReference type="HAMAP" id="MF_00208">
    <property type="entry name" value="MurE"/>
    <property type="match status" value="1"/>
</dbReference>
<dbReference type="InterPro" id="IPR018109">
    <property type="entry name" value="Folylpolyglutamate_synth_CS"/>
</dbReference>
<dbReference type="InterPro" id="IPR036565">
    <property type="entry name" value="Mur-like_cat_sf"/>
</dbReference>
<dbReference type="InterPro" id="IPR004101">
    <property type="entry name" value="Mur_ligase_C"/>
</dbReference>
<dbReference type="InterPro" id="IPR036615">
    <property type="entry name" value="Mur_ligase_C_dom_sf"/>
</dbReference>
<dbReference type="InterPro" id="IPR013221">
    <property type="entry name" value="Mur_ligase_cen"/>
</dbReference>
<dbReference type="InterPro" id="IPR000713">
    <property type="entry name" value="Mur_ligase_N"/>
</dbReference>
<dbReference type="InterPro" id="IPR035911">
    <property type="entry name" value="MurE/MurF_N"/>
</dbReference>
<dbReference type="InterPro" id="IPR005761">
    <property type="entry name" value="UDP-N-AcMur-Glu-dNH2Pim_ligase"/>
</dbReference>
<dbReference type="NCBIfam" id="TIGR01085">
    <property type="entry name" value="murE"/>
    <property type="match status" value="1"/>
</dbReference>
<dbReference type="NCBIfam" id="NF001124">
    <property type="entry name" value="PRK00139.1-2"/>
    <property type="match status" value="1"/>
</dbReference>
<dbReference type="NCBIfam" id="NF001126">
    <property type="entry name" value="PRK00139.1-4"/>
    <property type="match status" value="1"/>
</dbReference>
<dbReference type="PANTHER" id="PTHR23135">
    <property type="entry name" value="MUR LIGASE FAMILY MEMBER"/>
    <property type="match status" value="1"/>
</dbReference>
<dbReference type="PANTHER" id="PTHR23135:SF4">
    <property type="entry name" value="UDP-N-ACETYLMURAMOYL-L-ALANYL-D-GLUTAMATE--2,6-DIAMINOPIMELATE LIGASE MURE HOMOLOG, CHLOROPLASTIC"/>
    <property type="match status" value="1"/>
</dbReference>
<dbReference type="Pfam" id="PF01225">
    <property type="entry name" value="Mur_ligase"/>
    <property type="match status" value="1"/>
</dbReference>
<dbReference type="Pfam" id="PF02875">
    <property type="entry name" value="Mur_ligase_C"/>
    <property type="match status" value="1"/>
</dbReference>
<dbReference type="Pfam" id="PF08245">
    <property type="entry name" value="Mur_ligase_M"/>
    <property type="match status" value="1"/>
</dbReference>
<dbReference type="SUPFAM" id="SSF53623">
    <property type="entry name" value="MurD-like peptide ligases, catalytic domain"/>
    <property type="match status" value="1"/>
</dbReference>
<dbReference type="SUPFAM" id="SSF53244">
    <property type="entry name" value="MurD-like peptide ligases, peptide-binding domain"/>
    <property type="match status" value="1"/>
</dbReference>
<dbReference type="SUPFAM" id="SSF63418">
    <property type="entry name" value="MurE/MurF N-terminal domain"/>
    <property type="match status" value="1"/>
</dbReference>
<name>MURE_CHLTE</name>
<organism>
    <name type="scientific">Chlorobaculum tepidum (strain ATCC 49652 / DSM 12025 / NBRC 103806 / TLS)</name>
    <name type="common">Chlorobium tepidum</name>
    <dbReference type="NCBI Taxonomy" id="194439"/>
    <lineage>
        <taxon>Bacteria</taxon>
        <taxon>Pseudomonadati</taxon>
        <taxon>Chlorobiota</taxon>
        <taxon>Chlorobiia</taxon>
        <taxon>Chlorobiales</taxon>
        <taxon>Chlorobiaceae</taxon>
        <taxon>Chlorobaculum</taxon>
    </lineage>
</organism>
<reference key="1">
    <citation type="journal article" date="2002" name="Proc. Natl. Acad. Sci. U.S.A.">
        <title>The complete genome sequence of Chlorobium tepidum TLS, a photosynthetic, anaerobic, green-sulfur bacterium.</title>
        <authorList>
            <person name="Eisen J.A."/>
            <person name="Nelson K.E."/>
            <person name="Paulsen I.T."/>
            <person name="Heidelberg J.F."/>
            <person name="Wu M."/>
            <person name="Dodson R.J."/>
            <person name="DeBoy R.T."/>
            <person name="Gwinn M.L."/>
            <person name="Nelson W.C."/>
            <person name="Haft D.H."/>
            <person name="Hickey E.K."/>
            <person name="Peterson J.D."/>
            <person name="Durkin A.S."/>
            <person name="Kolonay J.F."/>
            <person name="Yang F."/>
            <person name="Holt I.E."/>
            <person name="Umayam L.A."/>
            <person name="Mason T.M."/>
            <person name="Brenner M."/>
            <person name="Shea T.P."/>
            <person name="Parksey D.S."/>
            <person name="Nierman W.C."/>
            <person name="Feldblyum T.V."/>
            <person name="Hansen C.L."/>
            <person name="Craven M.B."/>
            <person name="Radune D."/>
            <person name="Vamathevan J.J."/>
            <person name="Khouri H.M."/>
            <person name="White O."/>
            <person name="Gruber T.M."/>
            <person name="Ketchum K.A."/>
            <person name="Venter J.C."/>
            <person name="Tettelin H."/>
            <person name="Bryant D.A."/>
            <person name="Fraser C.M."/>
        </authorList>
    </citation>
    <scope>NUCLEOTIDE SEQUENCE [LARGE SCALE GENOMIC DNA]</scope>
    <source>
        <strain>ATCC 49652 / DSM 12025 / NBRC 103806 / TLS</strain>
    </source>
</reference>
<proteinExistence type="inferred from homology"/>
<sequence length="508" mass="54302">MKEIREGAPGAQLDDLVAALGALAERRGGDGARAVITGVTCDSRAVTPGALFVAVRGLVADGHHFIGAAIEAGAVAVACEELPAAYSDSVTWLVVPDARKALAELSKAFYGNASDKLMLIGVTGTNGKTTTARLVTSMLNASGVAAGYIGTGLCRIGNHDIPLERTTPEPNRLHDLFRQMVDAGCRAAVMEVSSHSLVLDRVHGLFFRAAVFTNLTPEHLDFHETMEEYAEAKRLLFDQLNAEGFAVINADDPRAEFMAARLAPERVFCCSTGDNTSLCDPARRFHAVITASTVEGSKADVTFDGQSMAMQVPLPGAYNVMNMLEAFTVGVGLGIDPATALRSLAAADAIAGRMERIWSRDRSRCAVVDYAHTPDALQKALEALRAVTPADAKLAVVFGCGGNRDRQKRPEMGRIAAELADRVILTSDNPRDENPEAILDEVEAGMAGRVHLRIADRAEAIRRAVEQLGAGDILLVAGKGHEAYQEIRGVKHHFSDRECLEACFAQMK</sequence>